<keyword id="KW-0378">Hydrolase</keyword>
<keyword id="KW-0546">Nucleotide metabolism</keyword>
<keyword id="KW-0547">Nucleotide-binding</keyword>
<keyword id="KW-1185">Reference proteome</keyword>
<proteinExistence type="inferred from homology"/>
<comment type="function">
    <text evidence="1">Catalyzes the deamination of dCTP to dUTP.</text>
</comment>
<comment type="catalytic activity">
    <reaction evidence="1">
        <text>dCTP + H2O + H(+) = dUTP + NH4(+)</text>
        <dbReference type="Rhea" id="RHEA:22680"/>
        <dbReference type="ChEBI" id="CHEBI:15377"/>
        <dbReference type="ChEBI" id="CHEBI:15378"/>
        <dbReference type="ChEBI" id="CHEBI:28938"/>
        <dbReference type="ChEBI" id="CHEBI:61481"/>
        <dbReference type="ChEBI" id="CHEBI:61555"/>
        <dbReference type="EC" id="3.5.4.13"/>
    </reaction>
</comment>
<comment type="pathway">
    <text evidence="1">Pyrimidine metabolism; dUMP biosynthesis; dUMP from dCTP (dUTP route): step 1/2.</text>
</comment>
<comment type="subunit">
    <text evidence="1">Homotrimer.</text>
</comment>
<comment type="similarity">
    <text evidence="1">Belongs to the dCTP deaminase family.</text>
</comment>
<organism>
    <name type="scientific">Rhizorhabdus wittichii (strain DSM 6014 / CCUG 31198 / JCM 15750 / NBRC 105917 / EY 4224 / RW1)</name>
    <name type="common">Sphingomonas wittichii</name>
    <dbReference type="NCBI Taxonomy" id="392499"/>
    <lineage>
        <taxon>Bacteria</taxon>
        <taxon>Pseudomonadati</taxon>
        <taxon>Pseudomonadota</taxon>
        <taxon>Alphaproteobacteria</taxon>
        <taxon>Sphingomonadales</taxon>
        <taxon>Sphingomonadaceae</taxon>
        <taxon>Rhizorhabdus</taxon>
    </lineage>
</organism>
<sequence>MTIMSDKWIREQATKNGMIEPFVEAQRRDGCISYGLSSYGYDARVAPEFKIFTNVDSATVDPKDFASNSFVDRETDVCIIPPNSFALARTVEYFRVPRDVLVICLGKSTYARCGIIVNVTPLEPGWEGHVTLEFSNTTPLPAKIYANEGACQFLFLQGNEPCEISYADRAGKYMGQQGVTLPRL</sequence>
<evidence type="ECO:0000255" key="1">
    <source>
        <dbReference type="HAMAP-Rule" id="MF_00146"/>
    </source>
</evidence>
<name>DCD_RHIWR</name>
<feature type="chain" id="PRO_1000009822" description="dCTP deaminase">
    <location>
        <begin position="1"/>
        <end position="184"/>
    </location>
</feature>
<feature type="active site" description="Proton donor/acceptor" evidence="1">
    <location>
        <position position="133"/>
    </location>
</feature>
<feature type="binding site" evidence="1">
    <location>
        <begin position="107"/>
        <end position="112"/>
    </location>
    <ligand>
        <name>dCTP</name>
        <dbReference type="ChEBI" id="CHEBI:61481"/>
    </ligand>
</feature>
<feature type="binding site" evidence="1">
    <location>
        <begin position="131"/>
        <end position="133"/>
    </location>
    <ligand>
        <name>dCTP</name>
        <dbReference type="ChEBI" id="CHEBI:61481"/>
    </ligand>
</feature>
<feature type="binding site" evidence="1">
    <location>
        <position position="152"/>
    </location>
    <ligand>
        <name>dCTP</name>
        <dbReference type="ChEBI" id="CHEBI:61481"/>
    </ligand>
</feature>
<feature type="binding site" evidence="1">
    <location>
        <position position="166"/>
    </location>
    <ligand>
        <name>dCTP</name>
        <dbReference type="ChEBI" id="CHEBI:61481"/>
    </ligand>
</feature>
<feature type="binding site" evidence="1">
    <location>
        <position position="176"/>
    </location>
    <ligand>
        <name>dCTP</name>
        <dbReference type="ChEBI" id="CHEBI:61481"/>
    </ligand>
</feature>
<reference key="1">
    <citation type="journal article" date="2010" name="J. Bacteriol.">
        <title>Genome sequence of the dioxin-mineralizing bacterium Sphingomonas wittichii RW1.</title>
        <authorList>
            <person name="Miller T.R."/>
            <person name="Delcher A.L."/>
            <person name="Salzberg S.L."/>
            <person name="Saunders E."/>
            <person name="Detter J.C."/>
            <person name="Halden R.U."/>
        </authorList>
    </citation>
    <scope>NUCLEOTIDE SEQUENCE [LARGE SCALE GENOMIC DNA]</scope>
    <source>
        <strain>DSM 6014 / CCUG 31198 / JCM 15750 / NBRC 105917 / EY 4224 / RW1</strain>
    </source>
</reference>
<accession>A5VDM8</accession>
<gene>
    <name evidence="1" type="primary">dcd</name>
    <name type="ordered locus">Swit_4050</name>
</gene>
<dbReference type="EC" id="3.5.4.13" evidence="1"/>
<dbReference type="EMBL" id="CP000699">
    <property type="protein sequence ID" value="ABQ70394.1"/>
    <property type="molecule type" value="Genomic_DNA"/>
</dbReference>
<dbReference type="SMR" id="A5VDM8"/>
<dbReference type="STRING" id="392499.Swit_4050"/>
<dbReference type="PaxDb" id="392499-Swit_4050"/>
<dbReference type="KEGG" id="swi:Swit_4050"/>
<dbReference type="eggNOG" id="COG0717">
    <property type="taxonomic scope" value="Bacteria"/>
</dbReference>
<dbReference type="HOGENOM" id="CLU_087476_4_0_5"/>
<dbReference type="OrthoDB" id="9780956at2"/>
<dbReference type="UniPathway" id="UPA00610">
    <property type="reaction ID" value="UER00665"/>
</dbReference>
<dbReference type="Proteomes" id="UP000001989">
    <property type="component" value="Chromosome"/>
</dbReference>
<dbReference type="GO" id="GO:0008829">
    <property type="term" value="F:dCTP deaminase activity"/>
    <property type="evidence" value="ECO:0007669"/>
    <property type="project" value="UniProtKB-UniRule"/>
</dbReference>
<dbReference type="GO" id="GO:0000166">
    <property type="term" value="F:nucleotide binding"/>
    <property type="evidence" value="ECO:0007669"/>
    <property type="project" value="UniProtKB-KW"/>
</dbReference>
<dbReference type="GO" id="GO:0006226">
    <property type="term" value="P:dUMP biosynthetic process"/>
    <property type="evidence" value="ECO:0007669"/>
    <property type="project" value="UniProtKB-UniPathway"/>
</dbReference>
<dbReference type="GO" id="GO:0006229">
    <property type="term" value="P:dUTP biosynthetic process"/>
    <property type="evidence" value="ECO:0007669"/>
    <property type="project" value="UniProtKB-UniRule"/>
</dbReference>
<dbReference type="CDD" id="cd07557">
    <property type="entry name" value="trimeric_dUTPase"/>
    <property type="match status" value="1"/>
</dbReference>
<dbReference type="FunFam" id="2.70.40.10:FF:000001">
    <property type="entry name" value="dCTP deaminase"/>
    <property type="match status" value="1"/>
</dbReference>
<dbReference type="Gene3D" id="2.70.40.10">
    <property type="match status" value="1"/>
</dbReference>
<dbReference type="HAMAP" id="MF_00146">
    <property type="entry name" value="dCTP_deaminase"/>
    <property type="match status" value="1"/>
</dbReference>
<dbReference type="InterPro" id="IPR011962">
    <property type="entry name" value="dCTP_deaminase"/>
</dbReference>
<dbReference type="InterPro" id="IPR036157">
    <property type="entry name" value="dUTPase-like_sf"/>
</dbReference>
<dbReference type="InterPro" id="IPR033704">
    <property type="entry name" value="dUTPase_trimeric"/>
</dbReference>
<dbReference type="NCBIfam" id="TIGR02274">
    <property type="entry name" value="dCTP_deam"/>
    <property type="match status" value="1"/>
</dbReference>
<dbReference type="PANTHER" id="PTHR42680">
    <property type="entry name" value="DCTP DEAMINASE"/>
    <property type="match status" value="1"/>
</dbReference>
<dbReference type="PANTHER" id="PTHR42680:SF3">
    <property type="entry name" value="DCTP DEAMINASE"/>
    <property type="match status" value="1"/>
</dbReference>
<dbReference type="Pfam" id="PF22769">
    <property type="entry name" value="DCD"/>
    <property type="match status" value="1"/>
</dbReference>
<dbReference type="SUPFAM" id="SSF51283">
    <property type="entry name" value="dUTPase-like"/>
    <property type="match status" value="1"/>
</dbReference>
<protein>
    <recommendedName>
        <fullName evidence="1">dCTP deaminase</fullName>
        <ecNumber evidence="1">3.5.4.13</ecNumber>
    </recommendedName>
    <alternativeName>
        <fullName evidence="1">Deoxycytidine triphosphate deaminase</fullName>
    </alternativeName>
</protein>